<reference key="1">
    <citation type="submission" date="2005-07" db="EMBL/GenBank/DDBJ databases">
        <authorList>
            <person name="Mural R.J."/>
            <person name="Li P.W."/>
            <person name="Adams M.D."/>
            <person name="Amanatides P.G."/>
            <person name="Baden-Tillson H."/>
            <person name="Barnstead M."/>
            <person name="Chin S.H."/>
            <person name="Dew I."/>
            <person name="Evans C.A."/>
            <person name="Ferriera S."/>
            <person name="Flanigan M."/>
            <person name="Fosler C."/>
            <person name="Glodek A."/>
            <person name="Gu Z."/>
            <person name="Holt R.A."/>
            <person name="Jennings D."/>
            <person name="Kraft C.L."/>
            <person name="Lu F."/>
            <person name="Nguyen T."/>
            <person name="Nusskern D.R."/>
            <person name="Pfannkoch C.M."/>
            <person name="Sitter C."/>
            <person name="Sutton G.G."/>
            <person name="Venter J.C."/>
            <person name="Wang Z."/>
            <person name="Woodage T."/>
            <person name="Zheng X.H."/>
            <person name="Zhong F."/>
        </authorList>
    </citation>
    <scope>NUCLEOTIDE SEQUENCE [LARGE SCALE GENOMIC DNA]</scope>
    <source>
        <strain>Brown Norway</strain>
    </source>
</reference>
<reference key="2">
    <citation type="journal article" date="2004" name="Nature">
        <title>Genome sequence of the Brown Norway rat yields insights into mammalian evolution.</title>
        <authorList>
            <person name="Gibbs R.A."/>
            <person name="Weinstock G.M."/>
            <person name="Metzker M.L."/>
            <person name="Muzny D.M."/>
            <person name="Sodergren E.J."/>
            <person name="Scherer S."/>
            <person name="Scott G."/>
            <person name="Steffen D."/>
            <person name="Worley K.C."/>
            <person name="Burch P.E."/>
            <person name="Okwuonu G."/>
            <person name="Hines S."/>
            <person name="Lewis L."/>
            <person name="Deramo C."/>
            <person name="Delgado O."/>
            <person name="Dugan-Rocha S."/>
            <person name="Miner G."/>
            <person name="Morgan M."/>
            <person name="Hawes A."/>
            <person name="Gill R."/>
            <person name="Holt R.A."/>
            <person name="Adams M.D."/>
            <person name="Amanatides P.G."/>
            <person name="Baden-Tillson H."/>
            <person name="Barnstead M."/>
            <person name="Chin S."/>
            <person name="Evans C.A."/>
            <person name="Ferriera S."/>
            <person name="Fosler C."/>
            <person name="Glodek A."/>
            <person name="Gu Z."/>
            <person name="Jennings D."/>
            <person name="Kraft C.L."/>
            <person name="Nguyen T."/>
            <person name="Pfannkoch C.M."/>
            <person name="Sitter C."/>
            <person name="Sutton G.G."/>
            <person name="Venter J.C."/>
            <person name="Woodage T."/>
            <person name="Smith D."/>
            <person name="Lee H.-M."/>
            <person name="Gustafson E."/>
            <person name="Cahill P."/>
            <person name="Kana A."/>
            <person name="Doucette-Stamm L."/>
            <person name="Weinstock K."/>
            <person name="Fechtel K."/>
            <person name="Weiss R.B."/>
            <person name="Dunn D.M."/>
            <person name="Green E.D."/>
            <person name="Blakesley R.W."/>
            <person name="Bouffard G.G."/>
            <person name="De Jong P.J."/>
            <person name="Osoegawa K."/>
            <person name="Zhu B."/>
            <person name="Marra M."/>
            <person name="Schein J."/>
            <person name="Bosdet I."/>
            <person name="Fjell C."/>
            <person name="Jones S."/>
            <person name="Krzywinski M."/>
            <person name="Mathewson C."/>
            <person name="Siddiqui A."/>
            <person name="Wye N."/>
            <person name="McPherson J."/>
            <person name="Zhao S."/>
            <person name="Fraser C.M."/>
            <person name="Shetty J."/>
            <person name="Shatsman S."/>
            <person name="Geer K."/>
            <person name="Chen Y."/>
            <person name="Abramzon S."/>
            <person name="Nierman W.C."/>
            <person name="Havlak P.H."/>
            <person name="Chen R."/>
            <person name="Durbin K.J."/>
            <person name="Egan A."/>
            <person name="Ren Y."/>
            <person name="Song X.-Z."/>
            <person name="Li B."/>
            <person name="Liu Y."/>
            <person name="Qin X."/>
            <person name="Cawley S."/>
            <person name="Cooney A.J."/>
            <person name="D'Souza L.M."/>
            <person name="Martin K."/>
            <person name="Wu J.Q."/>
            <person name="Gonzalez-Garay M.L."/>
            <person name="Jackson A.R."/>
            <person name="Kalafus K.J."/>
            <person name="McLeod M.P."/>
            <person name="Milosavljevic A."/>
            <person name="Virk D."/>
            <person name="Volkov A."/>
            <person name="Wheeler D.A."/>
            <person name="Zhang Z."/>
            <person name="Bailey J.A."/>
            <person name="Eichler E.E."/>
            <person name="Tuzun E."/>
            <person name="Birney E."/>
            <person name="Mongin E."/>
            <person name="Ureta-Vidal A."/>
            <person name="Woodwark C."/>
            <person name="Zdobnov E."/>
            <person name="Bork P."/>
            <person name="Suyama M."/>
            <person name="Torrents D."/>
            <person name="Alexandersson M."/>
            <person name="Trask B.J."/>
            <person name="Young J.M."/>
            <person name="Huang H."/>
            <person name="Wang H."/>
            <person name="Xing H."/>
            <person name="Daniels S."/>
            <person name="Gietzen D."/>
            <person name="Schmidt J."/>
            <person name="Stevens K."/>
            <person name="Vitt U."/>
            <person name="Wingrove J."/>
            <person name="Camara F."/>
            <person name="Mar Alba M."/>
            <person name="Abril J.F."/>
            <person name="Guigo R."/>
            <person name="Smit A."/>
            <person name="Dubchak I."/>
            <person name="Rubin E.M."/>
            <person name="Couronne O."/>
            <person name="Poliakov A."/>
            <person name="Huebner N."/>
            <person name="Ganten D."/>
            <person name="Goesele C."/>
            <person name="Hummel O."/>
            <person name="Kreitler T."/>
            <person name="Lee Y.-A."/>
            <person name="Monti J."/>
            <person name="Schulz H."/>
            <person name="Zimdahl H."/>
            <person name="Himmelbauer H."/>
            <person name="Lehrach H."/>
            <person name="Jacob H.J."/>
            <person name="Bromberg S."/>
            <person name="Gullings-Handley J."/>
            <person name="Jensen-Seaman M.I."/>
            <person name="Kwitek A.E."/>
            <person name="Lazar J."/>
            <person name="Pasko D."/>
            <person name="Tonellato P.J."/>
            <person name="Twigger S."/>
            <person name="Ponting C.P."/>
            <person name="Duarte J.M."/>
            <person name="Rice S."/>
            <person name="Goodstadt L."/>
            <person name="Beatson S.A."/>
            <person name="Emes R.D."/>
            <person name="Winter E.E."/>
            <person name="Webber C."/>
            <person name="Brandt P."/>
            <person name="Nyakatura G."/>
            <person name="Adetobi M."/>
            <person name="Chiaromonte F."/>
            <person name="Elnitski L."/>
            <person name="Eswara P."/>
            <person name="Hardison R.C."/>
            <person name="Hou M."/>
            <person name="Kolbe D."/>
            <person name="Makova K."/>
            <person name="Miller W."/>
            <person name="Nekrutenko A."/>
            <person name="Riemer C."/>
            <person name="Schwartz S."/>
            <person name="Taylor J."/>
            <person name="Yang S."/>
            <person name="Zhang Y."/>
            <person name="Lindpaintner K."/>
            <person name="Andrews T.D."/>
            <person name="Caccamo M."/>
            <person name="Clamp M."/>
            <person name="Clarke L."/>
            <person name="Curwen V."/>
            <person name="Durbin R.M."/>
            <person name="Eyras E."/>
            <person name="Searle S.M."/>
            <person name="Cooper G.M."/>
            <person name="Batzoglou S."/>
            <person name="Brudno M."/>
            <person name="Sidow A."/>
            <person name="Stone E.A."/>
            <person name="Payseur B.A."/>
            <person name="Bourque G."/>
            <person name="Lopez-Otin C."/>
            <person name="Puente X.S."/>
            <person name="Chakrabarti K."/>
            <person name="Chatterji S."/>
            <person name="Dewey C."/>
            <person name="Pachter L."/>
            <person name="Bray N."/>
            <person name="Yap V.B."/>
            <person name="Caspi A."/>
            <person name="Tesler G."/>
            <person name="Pevzner P.A."/>
            <person name="Haussler D."/>
            <person name="Roskin K.M."/>
            <person name="Baertsch R."/>
            <person name="Clawson H."/>
            <person name="Furey T.S."/>
            <person name="Hinrichs A.S."/>
            <person name="Karolchik D."/>
            <person name="Kent W.J."/>
            <person name="Rosenbloom K.R."/>
            <person name="Trumbower H."/>
            <person name="Weirauch M."/>
            <person name="Cooper D.N."/>
            <person name="Stenson P.D."/>
            <person name="Ma B."/>
            <person name="Brent M."/>
            <person name="Arumugam M."/>
            <person name="Shteynberg D."/>
            <person name="Copley R.R."/>
            <person name="Taylor M.S."/>
            <person name="Riethman H."/>
            <person name="Mudunuri U."/>
            <person name="Peterson J."/>
            <person name="Guyer M."/>
            <person name="Felsenfeld A."/>
            <person name="Old S."/>
            <person name="Mockrin S."/>
            <person name="Collins F.S."/>
        </authorList>
    </citation>
    <scope>NUCLEOTIDE SEQUENCE [LARGE SCALE GENOMIC DNA]</scope>
    <source>
        <strain>Brown Norway</strain>
    </source>
</reference>
<reference key="3">
    <citation type="journal article" date="2004" name="Genome Res.">
        <title>The status, quality, and expansion of the NIH full-length cDNA project: the Mammalian Gene Collection (MGC).</title>
        <authorList>
            <consortium name="The MGC Project Team"/>
        </authorList>
    </citation>
    <scope>NUCLEOTIDE SEQUENCE [LARGE SCALE MRNA]</scope>
    <source>
        <strain>Brown Norway</strain>
        <tissue>Lung</tissue>
    </source>
</reference>
<reference key="4">
    <citation type="journal article" date="1998" name="J. Cell Biol.">
        <title>gp25L/emp24/p24 protein family members of the cis-Golgi network bind both COP I and II coatomer.</title>
        <authorList>
            <person name="Dominguez M."/>
            <person name="Dejgaard K."/>
            <person name="Fullekrug J."/>
            <person name="Dahan S."/>
            <person name="Fazel A."/>
            <person name="Paccaud J.P."/>
            <person name="Thomas D.Y."/>
            <person name="Bergeron J.J."/>
            <person name="Nilsson T."/>
        </authorList>
    </citation>
    <scope>PROTEIN SEQUENCE OF 38-64</scope>
    <scope>SIGNAL SEQUENCE CLEAVAGE SITE</scope>
    <scope>SUBUNIT</scope>
    <scope>SUBCELLULAR LOCATION</scope>
</reference>
<reference key="5">
    <citation type="journal article" date="2011" name="Biol. Cell">
        <title>Syntaxin 17 cycles between the ER and ERGIC and is required to maintain the architecture of ERGIC and Golgi.</title>
        <authorList>
            <person name="Muppirala M."/>
            <person name="Gupta V."/>
            <person name="Swarup G."/>
        </authorList>
    </citation>
    <scope>INTERACTION WITH STX17</scope>
</reference>
<evidence type="ECO:0000250" key="1"/>
<evidence type="ECO:0000250" key="2">
    <source>
        <dbReference type="UniProtKB" id="Q99KF1"/>
    </source>
</evidence>
<evidence type="ECO:0000255" key="3"/>
<evidence type="ECO:0000255" key="4">
    <source>
        <dbReference type="PROSITE-ProRule" id="PRU00096"/>
    </source>
</evidence>
<evidence type="ECO:0000269" key="5">
    <source>
    </source>
</evidence>
<evidence type="ECO:0000269" key="6">
    <source>
    </source>
</evidence>
<evidence type="ECO:0000305" key="7"/>
<feature type="signal peptide" evidence="6">
    <location>
        <begin position="1"/>
        <end position="37"/>
    </location>
</feature>
<feature type="chain" id="PRO_0000413988" description="Transmembrane emp24 domain-containing protein 9">
    <location>
        <begin position="38"/>
        <end position="235"/>
    </location>
</feature>
<feature type="topological domain" description="Lumenal" evidence="3">
    <location>
        <begin position="38"/>
        <end position="202"/>
    </location>
</feature>
<feature type="transmembrane region" description="Helical" evidence="3">
    <location>
        <begin position="203"/>
        <end position="222"/>
    </location>
</feature>
<feature type="topological domain" description="Cytoplasmic" evidence="3">
    <location>
        <begin position="223"/>
        <end position="235"/>
    </location>
</feature>
<feature type="domain" description="GOLD" evidence="4">
    <location>
        <begin position="47"/>
        <end position="145"/>
    </location>
</feature>
<feature type="region of interest" description="Required for interaction with STX17" evidence="1">
    <location>
        <begin position="121"/>
        <end position="160"/>
    </location>
</feature>
<feature type="coiled-coil region" evidence="3">
    <location>
        <begin position="154"/>
        <end position="184"/>
    </location>
</feature>
<feature type="short sequence motif" description="COPI vesicle coat-binding" evidence="3">
    <location>
        <begin position="228"/>
        <end position="235"/>
    </location>
</feature>
<feature type="short sequence motif" description="COPII vesicle coat-binding" evidence="3">
    <location>
        <begin position="228"/>
        <end position="229"/>
    </location>
</feature>
<feature type="modified residue" description="N6-acetyllysine" evidence="2">
    <location>
        <position position="160"/>
    </location>
</feature>
<feature type="glycosylation site" description="N-linked (GlcNAc...) asparagine" evidence="3">
    <location>
        <position position="125"/>
    </location>
</feature>
<feature type="sequence conflict" description="In Ref. 4; AA sequence." evidence="7" ref="4">
    <original>L</original>
    <variation>I</variation>
    <location>
        <position position="38"/>
    </location>
</feature>
<accession>Q5I0E7</accession>
<sequence length="235" mass="27028">MAAVRGVRVVGTSPGLLLGRGMRAFLLLLCLAARGGALYFHIGETEKKCFIEEIPDETMVIGNYRTQLYDKQREEYQPATPGLGMFVEVKDPEDKVILARQYGSEGRFTFTSHTPGEHQICLHSNSTKFSLFAGGMLRVHLDIQVGEHANDYAEIAAKDKLSELQLRVRQLVEQVEQIQKEQNYQRWREERFRQTSESTNQRVLWWSILQTLILVAIGVWQMRHLKSFFEAKKLV</sequence>
<name>TMED9_RAT</name>
<proteinExistence type="evidence at protein level"/>
<protein>
    <recommendedName>
        <fullName>Transmembrane emp24 domain-containing protein 9</fullName>
    </recommendedName>
    <alternativeName>
        <fullName>p24 family protein alpha-2</fullName>
        <shortName>p24alpha2</shortName>
    </alternativeName>
</protein>
<organism>
    <name type="scientific">Rattus norvegicus</name>
    <name type="common">Rat</name>
    <dbReference type="NCBI Taxonomy" id="10116"/>
    <lineage>
        <taxon>Eukaryota</taxon>
        <taxon>Metazoa</taxon>
        <taxon>Chordata</taxon>
        <taxon>Craniata</taxon>
        <taxon>Vertebrata</taxon>
        <taxon>Euteleostomi</taxon>
        <taxon>Mammalia</taxon>
        <taxon>Eutheria</taxon>
        <taxon>Euarchontoglires</taxon>
        <taxon>Glires</taxon>
        <taxon>Rodentia</taxon>
        <taxon>Myomorpha</taxon>
        <taxon>Muroidea</taxon>
        <taxon>Muridae</taxon>
        <taxon>Murinae</taxon>
        <taxon>Rattus</taxon>
    </lineage>
</organism>
<gene>
    <name type="primary">Tmed9</name>
</gene>
<dbReference type="EMBL" id="CH474032">
    <property type="protein sequence ID" value="EDL93964.1"/>
    <property type="molecule type" value="Genomic_DNA"/>
</dbReference>
<dbReference type="EMBL" id="BC088422">
    <property type="protein sequence ID" value="AAH88422.1"/>
    <property type="molecule type" value="mRNA"/>
</dbReference>
<dbReference type="RefSeq" id="NP_001009703.1">
    <property type="nucleotide sequence ID" value="NM_001009703.1"/>
</dbReference>
<dbReference type="SMR" id="Q5I0E7"/>
<dbReference type="BioGRID" id="262515">
    <property type="interactions" value="5"/>
</dbReference>
<dbReference type="FunCoup" id="Q5I0E7">
    <property type="interactions" value="2258"/>
</dbReference>
<dbReference type="IntAct" id="Q5I0E7">
    <property type="interactions" value="5"/>
</dbReference>
<dbReference type="STRING" id="10116.ENSRNOP00000030668"/>
<dbReference type="GlyCosmos" id="Q5I0E7">
    <property type="glycosylation" value="1 site, No reported glycans"/>
</dbReference>
<dbReference type="GlyGen" id="Q5I0E7">
    <property type="glycosylation" value="2 sites"/>
</dbReference>
<dbReference type="PhosphoSitePlus" id="Q5I0E7"/>
<dbReference type="jPOST" id="Q5I0E7"/>
<dbReference type="PaxDb" id="10116-ENSRNOP00000030668"/>
<dbReference type="Ensembl" id="ENSRNOT00000109911.1">
    <property type="protein sequence ID" value="ENSRNOP00000083476.1"/>
    <property type="gene ID" value="ENSRNOG00000021882.7"/>
</dbReference>
<dbReference type="GeneID" id="361207"/>
<dbReference type="KEGG" id="rno:361207"/>
<dbReference type="UCSC" id="RGD:1307627">
    <property type="organism name" value="rat"/>
</dbReference>
<dbReference type="AGR" id="RGD:1307627"/>
<dbReference type="CTD" id="54732"/>
<dbReference type="RGD" id="1307627">
    <property type="gene designation" value="Tmed9"/>
</dbReference>
<dbReference type="eggNOG" id="KOG1690">
    <property type="taxonomic scope" value="Eukaryota"/>
</dbReference>
<dbReference type="GeneTree" id="ENSGT00940000159747"/>
<dbReference type="HOGENOM" id="CLU_066963_2_2_1"/>
<dbReference type="InParanoid" id="Q5I0E7"/>
<dbReference type="OMA" id="AGIQFWH"/>
<dbReference type="OrthoDB" id="13106at9989"/>
<dbReference type="PhylomeDB" id="Q5I0E7"/>
<dbReference type="TreeFam" id="TF314123"/>
<dbReference type="Reactome" id="R-RNO-6807878">
    <property type="pathway name" value="COPI-mediated anterograde transport"/>
</dbReference>
<dbReference type="Reactome" id="R-RNO-6811434">
    <property type="pathway name" value="COPI-dependent Golgi-to-ER retrograde traffic"/>
</dbReference>
<dbReference type="PRO" id="PR:Q5I0E7"/>
<dbReference type="Proteomes" id="UP000002494">
    <property type="component" value="Chromosome 17"/>
</dbReference>
<dbReference type="Proteomes" id="UP000234681">
    <property type="component" value="Chromosome 17"/>
</dbReference>
<dbReference type="Bgee" id="ENSRNOG00000021882">
    <property type="expression patterns" value="Expressed in pancreas and 20 other cell types or tissues"/>
</dbReference>
<dbReference type="GO" id="GO:0030134">
    <property type="term" value="C:COPII-coated ER to Golgi transport vesicle"/>
    <property type="evidence" value="ECO:0000318"/>
    <property type="project" value="GO_Central"/>
</dbReference>
<dbReference type="GO" id="GO:0005783">
    <property type="term" value="C:endoplasmic reticulum"/>
    <property type="evidence" value="ECO:0000266"/>
    <property type="project" value="RGD"/>
</dbReference>
<dbReference type="GO" id="GO:0005789">
    <property type="term" value="C:endoplasmic reticulum membrane"/>
    <property type="evidence" value="ECO:0007669"/>
    <property type="project" value="UniProtKB-SubCell"/>
</dbReference>
<dbReference type="GO" id="GO:0005793">
    <property type="term" value="C:endoplasmic reticulum-Golgi intermediate compartment"/>
    <property type="evidence" value="ECO:0000266"/>
    <property type="project" value="RGD"/>
</dbReference>
<dbReference type="GO" id="GO:0033116">
    <property type="term" value="C:endoplasmic reticulum-Golgi intermediate compartment membrane"/>
    <property type="evidence" value="ECO:0007669"/>
    <property type="project" value="UniProtKB-SubCell"/>
</dbReference>
<dbReference type="GO" id="GO:0005794">
    <property type="term" value="C:Golgi apparatus"/>
    <property type="evidence" value="ECO:0000266"/>
    <property type="project" value="RGD"/>
</dbReference>
<dbReference type="GO" id="GO:0000139">
    <property type="term" value="C:Golgi membrane"/>
    <property type="evidence" value="ECO:0007669"/>
    <property type="project" value="GOC"/>
</dbReference>
<dbReference type="GO" id="GO:0008021">
    <property type="term" value="C:synaptic vesicle"/>
    <property type="evidence" value="ECO:0000266"/>
    <property type="project" value="RGD"/>
</dbReference>
<dbReference type="GO" id="GO:0019905">
    <property type="term" value="F:syntaxin binding"/>
    <property type="evidence" value="ECO:0000266"/>
    <property type="project" value="RGD"/>
</dbReference>
<dbReference type="GO" id="GO:0048205">
    <property type="term" value="P:COPI coating of Golgi vesicle"/>
    <property type="evidence" value="ECO:0000266"/>
    <property type="project" value="RGD"/>
</dbReference>
<dbReference type="GO" id="GO:0006888">
    <property type="term" value="P:endoplasmic reticulum to Golgi vesicle-mediated transport"/>
    <property type="evidence" value="ECO:0000318"/>
    <property type="project" value="GO_Central"/>
</dbReference>
<dbReference type="GO" id="GO:0007030">
    <property type="term" value="P:Golgi organization"/>
    <property type="evidence" value="ECO:0000266"/>
    <property type="project" value="RGD"/>
</dbReference>
<dbReference type="GO" id="GO:0006886">
    <property type="term" value="P:intracellular protein transport"/>
    <property type="evidence" value="ECO:0000318"/>
    <property type="project" value="GO_Central"/>
</dbReference>
<dbReference type="GO" id="GO:0010638">
    <property type="term" value="P:positive regulation of organelle organization"/>
    <property type="evidence" value="ECO:0000266"/>
    <property type="project" value="RGD"/>
</dbReference>
<dbReference type="InterPro" id="IPR015720">
    <property type="entry name" value="Emp24-like"/>
</dbReference>
<dbReference type="InterPro" id="IPR009038">
    <property type="entry name" value="GOLD_dom"/>
</dbReference>
<dbReference type="PANTHER" id="PTHR22811">
    <property type="entry name" value="TRANSMEMBRANE EMP24 DOMAIN-CONTAINING PROTEIN"/>
    <property type="match status" value="1"/>
</dbReference>
<dbReference type="Pfam" id="PF01105">
    <property type="entry name" value="EMP24_GP25L"/>
    <property type="match status" value="1"/>
</dbReference>
<dbReference type="SMART" id="SM01190">
    <property type="entry name" value="EMP24_GP25L"/>
    <property type="match status" value="1"/>
</dbReference>
<dbReference type="PROSITE" id="PS50866">
    <property type="entry name" value="GOLD"/>
    <property type="match status" value="1"/>
</dbReference>
<keyword id="KW-0007">Acetylation</keyword>
<keyword id="KW-0175">Coiled coil</keyword>
<keyword id="KW-0903">Direct protein sequencing</keyword>
<keyword id="KW-0256">Endoplasmic reticulum</keyword>
<keyword id="KW-0325">Glycoprotein</keyword>
<keyword id="KW-0333">Golgi apparatus</keyword>
<keyword id="KW-0472">Membrane</keyword>
<keyword id="KW-0653">Protein transport</keyword>
<keyword id="KW-1185">Reference proteome</keyword>
<keyword id="KW-0732">Signal</keyword>
<keyword id="KW-0812">Transmembrane</keyword>
<keyword id="KW-1133">Transmembrane helix</keyword>
<keyword id="KW-0813">Transport</keyword>
<comment type="function">
    <text evidence="1">Appears to be involved in vesicular protein trafficking, mainly in the early secretory pathway. In COPI vesicle-mediated retrograde transport involved in the coatomer recruitment to membranes of the early secretory pathway. Increases coatomer-dependent activity of ARFGAP2. Thought to play a crucial role in the specific retention of p24 complexes in cis-Golgi membranes; specifically contributes to the coupled localization of TMED2 and TMED10 in the cis-Golgi network. May be involved in organization of intracellular membranes, such as of the ER-Golgi intermediate compartment and the Golgi apparatus. Involved in ER localization of PTPN2 (By similarity).</text>
</comment>
<comment type="subunit">
    <text evidence="1 5 6">Monomer and homodimer in endoplasmic reticulum. Predominantly monomeric and to lesser extent homodimeric in endoplasmic reticulum-Golgi intermediate compartment and cis-Golgi network. Probably oligomerizes with other members of the EMP24/GP25L family such as TMED2, TMED7 and TMED10. Interacts with TMED5. Interacts (via C-terminus) with COPG1; the interaction involves dimeric TMED9. Interacts with PTPN2 and SPAST (By similarity). Interacts with STX17; the interaction is direct.</text>
</comment>
<comment type="interaction">
    <interactant intactId="EBI-920903">
        <id>Q5I0E7</id>
    </interactant>
    <interactant intactId="EBI-4422912">
        <id>Q9R064</id>
        <label>Gorasp2</label>
    </interactant>
    <organismsDiffer>false</organismsDiffer>
    <experiments>3</experiments>
</comment>
<comment type="subcellular location">
    <subcellularLocation>
        <location evidence="6">Endoplasmic reticulum membrane</location>
        <topology evidence="6">Single-pass type I membrane protein</topology>
    </subcellularLocation>
    <subcellularLocation>
        <location evidence="6">Golgi apparatus</location>
        <location evidence="6">cis-Golgi network membrane</location>
        <topology evidence="6">Single-pass type I membrane protein</topology>
    </subcellularLocation>
    <subcellularLocation>
        <location evidence="6">Endoplasmic reticulum-Golgi intermediate compartment membrane</location>
        <topology evidence="6">Single-pass type I membrane protein</topology>
    </subcellularLocation>
    <subcellularLocation>
        <location evidence="1">Golgi apparatus</location>
        <location evidence="1">trans-Golgi network membrane</location>
        <topology evidence="1">Single-pass type I membrane protein</topology>
    </subcellularLocation>
    <text>Cycles between compartments of the early secretatory pathway.</text>
</comment>
<comment type="PTM">
    <text evidence="1">N-linked glycosylated containing high mannose.</text>
</comment>
<comment type="similarity">
    <text evidence="7">Belongs to the EMP24/GP25L family.</text>
</comment>